<sequence>MKRISTTITTTITITTGNGAG</sequence>
<reference key="1">
    <citation type="journal article" date="2006" name="Mol. Microbiol.">
        <title>Role of pathogenicity island-associated integrases in the genome plasticity of uropathogenic Escherichia coli strain 536.</title>
        <authorList>
            <person name="Hochhut B."/>
            <person name="Wilde C."/>
            <person name="Balling G."/>
            <person name="Middendorf B."/>
            <person name="Dobrindt U."/>
            <person name="Brzuszkiewicz E."/>
            <person name="Gottschalk G."/>
            <person name="Carniel E."/>
            <person name="Hacker J."/>
        </authorList>
    </citation>
    <scope>NUCLEOTIDE SEQUENCE [LARGE SCALE GENOMIC DNA]</scope>
    <source>
        <strain>536 / UPEC</strain>
    </source>
</reference>
<accession>Q0TLY8</accession>
<organism>
    <name type="scientific">Escherichia coli O6:K15:H31 (strain 536 / UPEC)</name>
    <dbReference type="NCBI Taxonomy" id="362663"/>
    <lineage>
        <taxon>Bacteria</taxon>
        <taxon>Pseudomonadati</taxon>
        <taxon>Pseudomonadota</taxon>
        <taxon>Gammaproteobacteria</taxon>
        <taxon>Enterobacterales</taxon>
        <taxon>Enterobacteriaceae</taxon>
        <taxon>Escherichia</taxon>
    </lineage>
</organism>
<name>LPT_ECOL5</name>
<protein>
    <recommendedName>
        <fullName evidence="1">thr operon leader peptide</fullName>
    </recommendedName>
    <alternativeName>
        <fullName evidence="1">thr operon attenuator</fullName>
    </alternativeName>
</protein>
<gene>
    <name evidence="1" type="primary">thrL</name>
    <name type="ordered locus">ECP_0001</name>
</gene>
<feature type="peptide" id="PRO_0000312886" description="thr operon leader peptide">
    <location>
        <begin position="1"/>
        <end position="21"/>
    </location>
</feature>
<comment type="function">
    <text evidence="1">This protein is involved in control of the biosynthesis of threonine.</text>
</comment>
<comment type="similarity">
    <text evidence="1">Belongs to the thr operon leader peptide family.</text>
</comment>
<proteinExistence type="inferred from homology"/>
<evidence type="ECO:0000255" key="1">
    <source>
        <dbReference type="HAMAP-Rule" id="MF_01907"/>
    </source>
</evidence>
<dbReference type="EMBL" id="CP000247">
    <property type="protein sequence ID" value="ABG68043.1"/>
    <property type="molecule type" value="Genomic_DNA"/>
</dbReference>
<dbReference type="RefSeq" id="WP_001386572.1">
    <property type="nucleotide sequence ID" value="NC_008253.1"/>
</dbReference>
<dbReference type="GeneID" id="93777441"/>
<dbReference type="KEGG" id="ecp:ECP_0001"/>
<dbReference type="HOGENOM" id="CLU_221491_0_1_6"/>
<dbReference type="Proteomes" id="UP000009182">
    <property type="component" value="Chromosome"/>
</dbReference>
<dbReference type="GO" id="GO:0009088">
    <property type="term" value="P:threonine biosynthetic process"/>
    <property type="evidence" value="ECO:0007669"/>
    <property type="project" value="UniProtKB-UniRule"/>
</dbReference>
<dbReference type="GO" id="GO:0031556">
    <property type="term" value="P:transcriptional attenuation by ribosome"/>
    <property type="evidence" value="ECO:0007669"/>
    <property type="project" value="UniProtKB-UniRule"/>
</dbReference>
<dbReference type="HAMAP" id="MF_01907">
    <property type="entry name" value="Leader_Thr"/>
    <property type="match status" value="1"/>
</dbReference>
<dbReference type="InterPro" id="IPR011720">
    <property type="entry name" value="Thr_lead_pept"/>
</dbReference>
<dbReference type="NCBIfam" id="NF007329">
    <property type="entry name" value="PRK09816.1"/>
    <property type="match status" value="1"/>
</dbReference>
<dbReference type="NCBIfam" id="TIGR02077">
    <property type="entry name" value="thr_lead_pep"/>
    <property type="match status" value="1"/>
</dbReference>
<dbReference type="Pfam" id="PF08254">
    <property type="entry name" value="Leader_Thr"/>
    <property type="match status" value="1"/>
</dbReference>
<keyword id="KW-0028">Amino-acid biosynthesis</keyword>
<keyword id="KW-0428">Leader peptide</keyword>
<keyword id="KW-0791">Threonine biosynthesis</keyword>